<proteinExistence type="inferred from homology"/>
<name>FMT_BIFLD</name>
<dbReference type="EC" id="2.1.2.9" evidence="1"/>
<dbReference type="EMBL" id="CP000605">
    <property type="protein sequence ID" value="ACD99411.1"/>
    <property type="molecule type" value="Genomic_DNA"/>
</dbReference>
<dbReference type="RefSeq" id="WP_007053160.1">
    <property type="nucleotide sequence ID" value="NZ_AABM02000004.1"/>
</dbReference>
<dbReference type="SMR" id="B3DRM9"/>
<dbReference type="KEGG" id="blj:BLD_1966"/>
<dbReference type="HOGENOM" id="CLU_033347_1_0_11"/>
<dbReference type="Proteomes" id="UP000002419">
    <property type="component" value="Chromosome"/>
</dbReference>
<dbReference type="GO" id="GO:0005829">
    <property type="term" value="C:cytosol"/>
    <property type="evidence" value="ECO:0007669"/>
    <property type="project" value="TreeGrafter"/>
</dbReference>
<dbReference type="GO" id="GO:0004479">
    <property type="term" value="F:methionyl-tRNA formyltransferase activity"/>
    <property type="evidence" value="ECO:0007669"/>
    <property type="project" value="UniProtKB-UniRule"/>
</dbReference>
<dbReference type="CDD" id="cd08646">
    <property type="entry name" value="FMT_core_Met-tRNA-FMT_N"/>
    <property type="match status" value="1"/>
</dbReference>
<dbReference type="CDD" id="cd08704">
    <property type="entry name" value="Met_tRNA_FMT_C"/>
    <property type="match status" value="1"/>
</dbReference>
<dbReference type="Gene3D" id="3.10.25.10">
    <property type="entry name" value="Formyl transferase, C-terminal domain"/>
    <property type="match status" value="1"/>
</dbReference>
<dbReference type="Gene3D" id="3.40.50.170">
    <property type="entry name" value="Formyl transferase, N-terminal domain"/>
    <property type="match status" value="1"/>
</dbReference>
<dbReference type="HAMAP" id="MF_00182">
    <property type="entry name" value="Formyl_trans"/>
    <property type="match status" value="1"/>
</dbReference>
<dbReference type="InterPro" id="IPR005794">
    <property type="entry name" value="Fmt"/>
</dbReference>
<dbReference type="InterPro" id="IPR005793">
    <property type="entry name" value="Formyl_trans_C"/>
</dbReference>
<dbReference type="InterPro" id="IPR037022">
    <property type="entry name" value="Formyl_trans_C_sf"/>
</dbReference>
<dbReference type="InterPro" id="IPR002376">
    <property type="entry name" value="Formyl_transf_N"/>
</dbReference>
<dbReference type="InterPro" id="IPR036477">
    <property type="entry name" value="Formyl_transf_N_sf"/>
</dbReference>
<dbReference type="InterPro" id="IPR011034">
    <property type="entry name" value="Formyl_transferase-like_C_sf"/>
</dbReference>
<dbReference type="InterPro" id="IPR044135">
    <property type="entry name" value="Met-tRNA-FMT_C"/>
</dbReference>
<dbReference type="InterPro" id="IPR041711">
    <property type="entry name" value="Met-tRNA-FMT_N"/>
</dbReference>
<dbReference type="NCBIfam" id="TIGR00460">
    <property type="entry name" value="fmt"/>
    <property type="match status" value="1"/>
</dbReference>
<dbReference type="PANTHER" id="PTHR11138">
    <property type="entry name" value="METHIONYL-TRNA FORMYLTRANSFERASE"/>
    <property type="match status" value="1"/>
</dbReference>
<dbReference type="PANTHER" id="PTHR11138:SF5">
    <property type="entry name" value="METHIONYL-TRNA FORMYLTRANSFERASE, MITOCHONDRIAL"/>
    <property type="match status" value="1"/>
</dbReference>
<dbReference type="Pfam" id="PF02911">
    <property type="entry name" value="Formyl_trans_C"/>
    <property type="match status" value="1"/>
</dbReference>
<dbReference type="Pfam" id="PF00551">
    <property type="entry name" value="Formyl_trans_N"/>
    <property type="match status" value="1"/>
</dbReference>
<dbReference type="SUPFAM" id="SSF50486">
    <property type="entry name" value="FMT C-terminal domain-like"/>
    <property type="match status" value="1"/>
</dbReference>
<dbReference type="SUPFAM" id="SSF53328">
    <property type="entry name" value="Formyltransferase"/>
    <property type="match status" value="1"/>
</dbReference>
<evidence type="ECO:0000255" key="1">
    <source>
        <dbReference type="HAMAP-Rule" id="MF_00182"/>
    </source>
</evidence>
<reference key="1">
    <citation type="journal article" date="2008" name="BMC Genomics">
        <title>Comparative genomic analysis of the gut bacterium Bifidobacterium longum reveals loci susceptible to deletion during pure culture growth.</title>
        <authorList>
            <person name="Lee J.H."/>
            <person name="Karamychev V.N."/>
            <person name="Kozyavkin S.A."/>
            <person name="Mills D."/>
            <person name="Pavlov A.R."/>
            <person name="Pavlova N.V."/>
            <person name="Polouchine N.N."/>
            <person name="Richardson P.M."/>
            <person name="Shakhova V.V."/>
            <person name="Slesarev A.I."/>
            <person name="Weimer B."/>
            <person name="O'Sullivan D.J."/>
        </authorList>
    </citation>
    <scope>NUCLEOTIDE SEQUENCE [LARGE SCALE GENOMIC DNA]</scope>
    <source>
        <strain>DJO10A</strain>
    </source>
</reference>
<organism>
    <name type="scientific">Bifidobacterium longum (strain DJO10A)</name>
    <dbReference type="NCBI Taxonomy" id="205913"/>
    <lineage>
        <taxon>Bacteria</taxon>
        <taxon>Bacillati</taxon>
        <taxon>Actinomycetota</taxon>
        <taxon>Actinomycetes</taxon>
        <taxon>Bifidobacteriales</taxon>
        <taxon>Bifidobacteriaceae</taxon>
        <taxon>Bifidobacterium</taxon>
    </lineage>
</organism>
<feature type="chain" id="PRO_1000098377" description="Methionyl-tRNA formyltransferase">
    <location>
        <begin position="1"/>
        <end position="328"/>
    </location>
</feature>
<feature type="binding site" evidence="1">
    <location>
        <begin position="110"/>
        <end position="113"/>
    </location>
    <ligand>
        <name>(6S)-5,6,7,8-tetrahydrofolate</name>
        <dbReference type="ChEBI" id="CHEBI:57453"/>
    </ligand>
</feature>
<keyword id="KW-0648">Protein biosynthesis</keyword>
<keyword id="KW-0808">Transferase</keyword>
<gene>
    <name evidence="1" type="primary">fmt</name>
    <name type="ordered locus">BLD_1966</name>
</gene>
<accession>B3DRM9</accession>
<comment type="function">
    <text evidence="1">Attaches a formyl group to the free amino group of methionyl-tRNA(fMet). The formyl group appears to play a dual role in the initiator identity of N-formylmethionyl-tRNA by promoting its recognition by IF2 and preventing the misappropriation of this tRNA by the elongation apparatus.</text>
</comment>
<comment type="catalytic activity">
    <reaction evidence="1">
        <text>L-methionyl-tRNA(fMet) + (6R)-10-formyltetrahydrofolate = N-formyl-L-methionyl-tRNA(fMet) + (6S)-5,6,7,8-tetrahydrofolate + H(+)</text>
        <dbReference type="Rhea" id="RHEA:24380"/>
        <dbReference type="Rhea" id="RHEA-COMP:9952"/>
        <dbReference type="Rhea" id="RHEA-COMP:9953"/>
        <dbReference type="ChEBI" id="CHEBI:15378"/>
        <dbReference type="ChEBI" id="CHEBI:57453"/>
        <dbReference type="ChEBI" id="CHEBI:78530"/>
        <dbReference type="ChEBI" id="CHEBI:78844"/>
        <dbReference type="ChEBI" id="CHEBI:195366"/>
        <dbReference type="EC" id="2.1.2.9"/>
    </reaction>
</comment>
<comment type="similarity">
    <text evidence="1">Belongs to the Fmt family.</text>
</comment>
<sequence length="328" mass="34765">MLKLVFAGTPDVAVPSLKAFAADPRFDVVGVITRPDAPTGRGRKLTPSPVKATALELGLPVIDLKPRSPEFMEALNNLHADIAAVIAYGNILPKNVLDAVPMGWYNLHFSNLPKWRGAAPAQRAIWAGDPTTGADVFKVGEGLDDGPIVASLTIELTGRETSGELLDRLAEEGAPMYVDALAAVGEGTATFTAQPAEGLEYAHKITVEDARISWTDEAEAIDRQVRACTPHPGAWTELFAEGPIADNDEPAAKPLTLHILAAQPADQSNPNTPAELQPGELKVGKKNVWVGTGSTPLELTQVKAQGKKAMRAADWARGARLSPAACVR</sequence>
<protein>
    <recommendedName>
        <fullName evidence="1">Methionyl-tRNA formyltransferase</fullName>
        <ecNumber evidence="1">2.1.2.9</ecNumber>
    </recommendedName>
</protein>